<organism>
    <name type="scientific">Gossypium hirsutum</name>
    <name type="common">Upland cotton</name>
    <name type="synonym">Gossypium mexicanum</name>
    <dbReference type="NCBI Taxonomy" id="3635"/>
    <lineage>
        <taxon>Eukaryota</taxon>
        <taxon>Viridiplantae</taxon>
        <taxon>Streptophyta</taxon>
        <taxon>Embryophyta</taxon>
        <taxon>Tracheophyta</taxon>
        <taxon>Spermatophyta</taxon>
        <taxon>Magnoliopsida</taxon>
        <taxon>eudicotyledons</taxon>
        <taxon>Gunneridae</taxon>
        <taxon>Pentapetalae</taxon>
        <taxon>rosids</taxon>
        <taxon>malvids</taxon>
        <taxon>Malvales</taxon>
        <taxon>Malvaceae</taxon>
        <taxon>Malvoideae</taxon>
        <taxon>Gossypium</taxon>
    </lineage>
</organism>
<proteinExistence type="evidence at transcript level"/>
<gene>
    <name type="primary">RPS16</name>
</gene>
<accession>P46293</accession>
<reference key="1">
    <citation type="journal article" date="1994" name="Plant Physiol.">
        <title>Isolation and characterization of a cDNA encoding ribosomal protein S16 from cotton (Gossypium hirsutum L.).</title>
        <authorList>
            <person name="Turley R.B."/>
            <person name="Ferguson D.L."/>
            <person name="Meredith W.R."/>
        </authorList>
    </citation>
    <scope>NUCLEOTIDE SEQUENCE [MRNA]</scope>
    <source>
        <strain>cv. Deltapine 62</strain>
    </source>
</reference>
<keyword id="KW-0963">Cytoplasm</keyword>
<keyword id="KW-1185">Reference proteome</keyword>
<keyword id="KW-0687">Ribonucleoprotein</keyword>
<keyword id="KW-0689">Ribosomal protein</keyword>
<feature type="chain" id="PRO_0000111491" description="Small ribosomal subunit protein uS9">
    <location>
        <begin position="1"/>
        <end position="145"/>
    </location>
</feature>
<protein>
    <recommendedName>
        <fullName evidence="1">Small ribosomal subunit protein uS9</fullName>
    </recommendedName>
    <alternativeName>
        <fullName>40S ribosomal protein S16</fullName>
    </alternativeName>
</protein>
<name>RS16_GOSHI</name>
<sequence>MAEKAIESVQCFGRKKTAVAVTHCKRGRGLIKINGCPIELVEPEILRFKAVEPILLLGRQRFTGVDMRIRVKGGGHTSQIYAIRQSIAKALVAFYQKYVDEQSKKEIKDILVGYDRTLLVADPRRCEPKKFGGRGARARFQKSYR</sequence>
<dbReference type="EMBL" id="X75954">
    <property type="protein sequence ID" value="CAA53567.1"/>
    <property type="molecule type" value="mRNA"/>
</dbReference>
<dbReference type="PIR" id="S41193">
    <property type="entry name" value="S41193"/>
</dbReference>
<dbReference type="SMR" id="P46293"/>
<dbReference type="STRING" id="3635.P46293"/>
<dbReference type="PaxDb" id="3635-P46293"/>
<dbReference type="Proteomes" id="UP000189702">
    <property type="component" value="Unplaced"/>
</dbReference>
<dbReference type="GO" id="GO:0022627">
    <property type="term" value="C:cytosolic small ribosomal subunit"/>
    <property type="evidence" value="ECO:0000318"/>
    <property type="project" value="GO_Central"/>
</dbReference>
<dbReference type="GO" id="GO:0003723">
    <property type="term" value="F:RNA binding"/>
    <property type="evidence" value="ECO:0000318"/>
    <property type="project" value="GO_Central"/>
</dbReference>
<dbReference type="GO" id="GO:0003735">
    <property type="term" value="F:structural constituent of ribosome"/>
    <property type="evidence" value="ECO:0000318"/>
    <property type="project" value="GO_Central"/>
</dbReference>
<dbReference type="GO" id="GO:0000462">
    <property type="term" value="P:maturation of SSU-rRNA from tricistronic rRNA transcript (SSU-rRNA, 5.8S rRNA, LSU-rRNA)"/>
    <property type="evidence" value="ECO:0000318"/>
    <property type="project" value="GO_Central"/>
</dbReference>
<dbReference type="GO" id="GO:0006412">
    <property type="term" value="P:translation"/>
    <property type="evidence" value="ECO:0007669"/>
    <property type="project" value="InterPro"/>
</dbReference>
<dbReference type="FunFam" id="3.30.230.10:FF:000007">
    <property type="entry name" value="40S ribosomal protein S16"/>
    <property type="match status" value="1"/>
</dbReference>
<dbReference type="Gene3D" id="3.30.230.10">
    <property type="match status" value="1"/>
</dbReference>
<dbReference type="InterPro" id="IPR020568">
    <property type="entry name" value="Ribosomal_Su5_D2-typ_SF"/>
</dbReference>
<dbReference type="InterPro" id="IPR000754">
    <property type="entry name" value="Ribosomal_uS9"/>
</dbReference>
<dbReference type="InterPro" id="IPR020574">
    <property type="entry name" value="Ribosomal_uS9_CS"/>
</dbReference>
<dbReference type="InterPro" id="IPR014721">
    <property type="entry name" value="Ribsml_uS5_D2-typ_fold_subgr"/>
</dbReference>
<dbReference type="PANTHER" id="PTHR21569">
    <property type="entry name" value="RIBOSOMAL PROTEIN S9"/>
    <property type="match status" value="1"/>
</dbReference>
<dbReference type="PANTHER" id="PTHR21569:SF44">
    <property type="entry name" value="SMALL RIBOSOMAL SUBUNIT PROTEIN US9"/>
    <property type="match status" value="1"/>
</dbReference>
<dbReference type="Pfam" id="PF00380">
    <property type="entry name" value="Ribosomal_S9"/>
    <property type="match status" value="1"/>
</dbReference>
<dbReference type="SUPFAM" id="SSF54211">
    <property type="entry name" value="Ribosomal protein S5 domain 2-like"/>
    <property type="match status" value="1"/>
</dbReference>
<dbReference type="PROSITE" id="PS00360">
    <property type="entry name" value="RIBOSOMAL_S9"/>
    <property type="match status" value="1"/>
</dbReference>
<evidence type="ECO:0000305" key="1"/>
<comment type="subcellular location">
    <subcellularLocation>
        <location>Cytoplasm</location>
    </subcellularLocation>
</comment>
<comment type="similarity">
    <text evidence="1">Belongs to the universal ribosomal protein uS9 family.</text>
</comment>